<feature type="chain" id="PRO_0000219750" description="Photosystem II reaction center protein L">
    <location>
        <begin position="1"/>
        <end position="38"/>
    </location>
</feature>
<feature type="transmembrane region" description="Helical" evidence="1">
    <location>
        <begin position="17"/>
        <end position="37"/>
    </location>
</feature>
<name>PSBL_NYMOD</name>
<reference key="1">
    <citation type="journal article" date="2000" name="Curr. Genet.">
        <title>Evolutionary significance of an unusual chloroplast DNA inversion found in two basal angiosperm lineages.</title>
        <authorList>
            <person name="Graham S.W."/>
            <person name="Olmstead R.G."/>
        </authorList>
    </citation>
    <scope>NUCLEOTIDE SEQUENCE [GENOMIC DNA]</scope>
</reference>
<protein>
    <recommendedName>
        <fullName evidence="1">Photosystem II reaction center protein L</fullName>
        <shortName evidence="1">PSII-L</shortName>
    </recommendedName>
</protein>
<sequence>MTQSNPNEQNVELNRTSLYWGLLLIFVLAVLFSNYFFN</sequence>
<organism>
    <name type="scientific">Nymphaea odorata</name>
    <name type="common">White water lily</name>
    <dbReference type="NCBI Taxonomy" id="4419"/>
    <lineage>
        <taxon>Eukaryota</taxon>
        <taxon>Viridiplantae</taxon>
        <taxon>Streptophyta</taxon>
        <taxon>Embryophyta</taxon>
        <taxon>Tracheophyta</taxon>
        <taxon>Spermatophyta</taxon>
        <taxon>Magnoliopsida</taxon>
        <taxon>Nymphaeales</taxon>
        <taxon>Nymphaeaceae</taxon>
        <taxon>Nymphaea</taxon>
    </lineage>
</organism>
<accession>Q7IW39</accession>
<proteinExistence type="inferred from homology"/>
<keyword id="KW-0150">Chloroplast</keyword>
<keyword id="KW-0472">Membrane</keyword>
<keyword id="KW-0602">Photosynthesis</keyword>
<keyword id="KW-0604">Photosystem II</keyword>
<keyword id="KW-0934">Plastid</keyword>
<keyword id="KW-0674">Reaction center</keyword>
<keyword id="KW-0793">Thylakoid</keyword>
<keyword id="KW-0812">Transmembrane</keyword>
<keyword id="KW-1133">Transmembrane helix</keyword>
<dbReference type="EMBL" id="AF188852">
    <property type="protein sequence ID" value="AAF82673.1"/>
    <property type="molecule type" value="Genomic_DNA"/>
</dbReference>
<dbReference type="SMR" id="Q7IW39"/>
<dbReference type="GO" id="GO:0009535">
    <property type="term" value="C:chloroplast thylakoid membrane"/>
    <property type="evidence" value="ECO:0007669"/>
    <property type="project" value="UniProtKB-SubCell"/>
</dbReference>
<dbReference type="GO" id="GO:0009539">
    <property type="term" value="C:photosystem II reaction center"/>
    <property type="evidence" value="ECO:0007669"/>
    <property type="project" value="InterPro"/>
</dbReference>
<dbReference type="GO" id="GO:0015979">
    <property type="term" value="P:photosynthesis"/>
    <property type="evidence" value="ECO:0007669"/>
    <property type="project" value="UniProtKB-UniRule"/>
</dbReference>
<dbReference type="HAMAP" id="MF_01317">
    <property type="entry name" value="PSII_PsbL"/>
    <property type="match status" value="1"/>
</dbReference>
<dbReference type="InterPro" id="IPR003372">
    <property type="entry name" value="PSII_PsbL"/>
</dbReference>
<dbReference type="InterPro" id="IPR037266">
    <property type="entry name" value="PSII_PsbL_sf"/>
</dbReference>
<dbReference type="NCBIfam" id="NF001972">
    <property type="entry name" value="PRK00753.1"/>
    <property type="match status" value="1"/>
</dbReference>
<dbReference type="Pfam" id="PF02419">
    <property type="entry name" value="PsbL"/>
    <property type="match status" value="1"/>
</dbReference>
<dbReference type="SUPFAM" id="SSF161017">
    <property type="entry name" value="Photosystem II reaction center protein L, PsbL"/>
    <property type="match status" value="1"/>
</dbReference>
<gene>
    <name evidence="1" type="primary">psbL</name>
</gene>
<comment type="function">
    <text evidence="1">One of the components of the core complex of photosystem II (PSII). PSII is a light-driven water:plastoquinone oxidoreductase that uses light energy to abstract electrons from H(2)O, generating O(2) and a proton gradient subsequently used for ATP formation. It consists of a core antenna complex that captures photons, and an electron transfer chain that converts photonic excitation into a charge separation. This subunit is found at the monomer-monomer interface and is required for correct PSII assembly and/or dimerization.</text>
</comment>
<comment type="subunit">
    <text evidence="1">PSII is composed of 1 copy each of membrane proteins PsbA, PsbB, PsbC, PsbD, PsbE, PsbF, PsbH, PsbI, PsbJ, PsbK, PsbL, PsbM, PsbT, PsbX, PsbY, PsbZ, Psb30/Ycf12, at least 3 peripheral proteins of the oxygen-evolving complex and a large number of cofactors. It forms dimeric complexes.</text>
</comment>
<comment type="subcellular location">
    <subcellularLocation>
        <location evidence="1">Plastid</location>
        <location evidence="1">Chloroplast thylakoid membrane</location>
        <topology evidence="1">Single-pass membrane protein</topology>
    </subcellularLocation>
</comment>
<comment type="similarity">
    <text evidence="1">Belongs to the PsbL family.</text>
</comment>
<evidence type="ECO:0000255" key="1">
    <source>
        <dbReference type="HAMAP-Rule" id="MF_01317"/>
    </source>
</evidence>
<geneLocation type="chloroplast"/>